<organism>
    <name type="scientific">Clostridium botulinum (strain 657 / Type Ba4)</name>
    <dbReference type="NCBI Taxonomy" id="515621"/>
    <lineage>
        <taxon>Bacteria</taxon>
        <taxon>Bacillati</taxon>
        <taxon>Bacillota</taxon>
        <taxon>Clostridia</taxon>
        <taxon>Eubacteriales</taxon>
        <taxon>Clostridiaceae</taxon>
        <taxon>Clostridium</taxon>
    </lineage>
</organism>
<sequence length="180" mass="20512">MMPRLQEKYEKEVVSALMDKFGYKNIMEVPKLEKIVINMGVGEAKENQKSLEAAVEDLAKITGQKPILTKAKKSVANFKIREDMPLGCKVTLRKQNMYEFADKLINVALPRVRDFSGVSSKSFDGRGNYAIGIKEQLIFPEIEFDKIDKIRGMDIIFVTTAKTDEEARELLRFLGMPFAR</sequence>
<accession>C3KVN9</accession>
<reference key="1">
    <citation type="submission" date="2008-05" db="EMBL/GenBank/DDBJ databases">
        <title>Genome sequence of Clostridium botulinum Ba4 strain 657.</title>
        <authorList>
            <person name="Shrivastava S."/>
            <person name="Brown J.L."/>
            <person name="Bruce D."/>
            <person name="Detter C."/>
            <person name="Munk C."/>
            <person name="Smith L.A."/>
            <person name="Smith T.J."/>
            <person name="Sutton G."/>
            <person name="Brettin T.S."/>
        </authorList>
    </citation>
    <scope>NUCLEOTIDE SEQUENCE [LARGE SCALE GENOMIC DNA]</scope>
    <source>
        <strain>657 / Type Ba4</strain>
    </source>
</reference>
<feature type="chain" id="PRO_1000214621" description="Large ribosomal subunit protein uL5">
    <location>
        <begin position="1"/>
        <end position="180"/>
    </location>
</feature>
<gene>
    <name evidence="1" type="primary">rplE</name>
    <name type="ordered locus">CLJ_B3777</name>
</gene>
<keyword id="KW-0687">Ribonucleoprotein</keyword>
<keyword id="KW-0689">Ribosomal protein</keyword>
<keyword id="KW-0694">RNA-binding</keyword>
<keyword id="KW-0699">rRNA-binding</keyword>
<keyword id="KW-0820">tRNA-binding</keyword>
<dbReference type="EMBL" id="CP001083">
    <property type="protein sequence ID" value="ACQ55127.1"/>
    <property type="molecule type" value="Genomic_DNA"/>
</dbReference>
<dbReference type="RefSeq" id="WP_003357534.1">
    <property type="nucleotide sequence ID" value="NC_012658.1"/>
</dbReference>
<dbReference type="SMR" id="C3KVN9"/>
<dbReference type="GeneID" id="5187726"/>
<dbReference type="KEGG" id="cbi:CLJ_B3777"/>
<dbReference type="HOGENOM" id="CLU_061015_2_1_9"/>
<dbReference type="Proteomes" id="UP000002333">
    <property type="component" value="Chromosome"/>
</dbReference>
<dbReference type="GO" id="GO:1990904">
    <property type="term" value="C:ribonucleoprotein complex"/>
    <property type="evidence" value="ECO:0007669"/>
    <property type="project" value="UniProtKB-KW"/>
</dbReference>
<dbReference type="GO" id="GO:0005840">
    <property type="term" value="C:ribosome"/>
    <property type="evidence" value="ECO:0007669"/>
    <property type="project" value="UniProtKB-KW"/>
</dbReference>
<dbReference type="GO" id="GO:0019843">
    <property type="term" value="F:rRNA binding"/>
    <property type="evidence" value="ECO:0007669"/>
    <property type="project" value="UniProtKB-UniRule"/>
</dbReference>
<dbReference type="GO" id="GO:0003735">
    <property type="term" value="F:structural constituent of ribosome"/>
    <property type="evidence" value="ECO:0007669"/>
    <property type="project" value="InterPro"/>
</dbReference>
<dbReference type="GO" id="GO:0000049">
    <property type="term" value="F:tRNA binding"/>
    <property type="evidence" value="ECO:0007669"/>
    <property type="project" value="UniProtKB-UniRule"/>
</dbReference>
<dbReference type="GO" id="GO:0006412">
    <property type="term" value="P:translation"/>
    <property type="evidence" value="ECO:0007669"/>
    <property type="project" value="UniProtKB-UniRule"/>
</dbReference>
<dbReference type="FunFam" id="3.30.1440.10:FF:000001">
    <property type="entry name" value="50S ribosomal protein L5"/>
    <property type="match status" value="1"/>
</dbReference>
<dbReference type="Gene3D" id="3.30.1440.10">
    <property type="match status" value="1"/>
</dbReference>
<dbReference type="HAMAP" id="MF_01333_B">
    <property type="entry name" value="Ribosomal_uL5_B"/>
    <property type="match status" value="1"/>
</dbReference>
<dbReference type="InterPro" id="IPR002132">
    <property type="entry name" value="Ribosomal_uL5"/>
</dbReference>
<dbReference type="InterPro" id="IPR020930">
    <property type="entry name" value="Ribosomal_uL5_bac-type"/>
</dbReference>
<dbReference type="InterPro" id="IPR031309">
    <property type="entry name" value="Ribosomal_uL5_C"/>
</dbReference>
<dbReference type="InterPro" id="IPR020929">
    <property type="entry name" value="Ribosomal_uL5_CS"/>
</dbReference>
<dbReference type="InterPro" id="IPR022803">
    <property type="entry name" value="Ribosomal_uL5_dom_sf"/>
</dbReference>
<dbReference type="InterPro" id="IPR031310">
    <property type="entry name" value="Ribosomal_uL5_N"/>
</dbReference>
<dbReference type="NCBIfam" id="NF000585">
    <property type="entry name" value="PRK00010.1"/>
    <property type="match status" value="1"/>
</dbReference>
<dbReference type="PANTHER" id="PTHR11994">
    <property type="entry name" value="60S RIBOSOMAL PROTEIN L11-RELATED"/>
    <property type="match status" value="1"/>
</dbReference>
<dbReference type="Pfam" id="PF00281">
    <property type="entry name" value="Ribosomal_L5"/>
    <property type="match status" value="1"/>
</dbReference>
<dbReference type="Pfam" id="PF00673">
    <property type="entry name" value="Ribosomal_L5_C"/>
    <property type="match status" value="1"/>
</dbReference>
<dbReference type="PIRSF" id="PIRSF002161">
    <property type="entry name" value="Ribosomal_L5"/>
    <property type="match status" value="1"/>
</dbReference>
<dbReference type="SUPFAM" id="SSF55282">
    <property type="entry name" value="RL5-like"/>
    <property type="match status" value="1"/>
</dbReference>
<dbReference type="PROSITE" id="PS00358">
    <property type="entry name" value="RIBOSOMAL_L5"/>
    <property type="match status" value="1"/>
</dbReference>
<comment type="function">
    <text evidence="1">This is one of the proteins that bind and probably mediate the attachment of the 5S RNA into the large ribosomal subunit, where it forms part of the central protuberance. In the 70S ribosome it contacts protein S13 of the 30S subunit (bridge B1b), connecting the 2 subunits; this bridge is implicated in subunit movement. Contacts the P site tRNA; the 5S rRNA and some of its associated proteins might help stabilize positioning of ribosome-bound tRNAs.</text>
</comment>
<comment type="subunit">
    <text evidence="1">Part of the 50S ribosomal subunit; part of the 5S rRNA/L5/L18/L25 subcomplex. Contacts the 5S rRNA and the P site tRNA. Forms a bridge to the 30S subunit in the 70S ribosome.</text>
</comment>
<comment type="similarity">
    <text evidence="1">Belongs to the universal ribosomal protein uL5 family.</text>
</comment>
<name>RL5_CLOB6</name>
<protein>
    <recommendedName>
        <fullName evidence="1">Large ribosomal subunit protein uL5</fullName>
    </recommendedName>
    <alternativeName>
        <fullName evidence="2">50S ribosomal protein L5</fullName>
    </alternativeName>
</protein>
<proteinExistence type="inferred from homology"/>
<evidence type="ECO:0000255" key="1">
    <source>
        <dbReference type="HAMAP-Rule" id="MF_01333"/>
    </source>
</evidence>
<evidence type="ECO:0000305" key="2"/>